<reference key="1">
    <citation type="submission" date="2004-11" db="EMBL/GenBank/DDBJ databases">
        <authorList>
            <consortium name="The German cDNA consortium"/>
        </authorList>
    </citation>
    <scope>NUCLEOTIDE SEQUENCE [LARGE SCALE MRNA]</scope>
    <source>
        <tissue>Kidney</tissue>
    </source>
</reference>
<feature type="chain" id="PRO_0000324170" description="Solute carrier family 22 member 6">
    <location>
        <begin position="1"/>
        <end position="550"/>
    </location>
</feature>
<feature type="topological domain" description="Cytoplasmic" evidence="3">
    <location>
        <begin position="1"/>
        <end position="9"/>
    </location>
</feature>
<feature type="transmembrane region" description="Helical" evidence="3">
    <location>
        <begin position="10"/>
        <end position="30"/>
    </location>
</feature>
<feature type="topological domain" description="Extracellular" evidence="3">
    <location>
        <begin position="31"/>
        <end position="135"/>
    </location>
</feature>
<feature type="transmembrane region" description="Helical" evidence="3">
    <location>
        <begin position="136"/>
        <end position="156"/>
    </location>
</feature>
<feature type="topological domain" description="Cytoplasmic" evidence="3">
    <location>
        <begin position="157"/>
        <end position="164"/>
    </location>
</feature>
<feature type="transmembrane region" description="Helical" evidence="3">
    <location>
        <begin position="165"/>
        <end position="187"/>
    </location>
</feature>
<feature type="topological domain" description="Extracellular" evidence="3">
    <location>
        <begin position="188"/>
        <end position="195"/>
    </location>
</feature>
<feature type="transmembrane region" description="Helical" evidence="3">
    <location>
        <begin position="196"/>
        <end position="216"/>
    </location>
</feature>
<feature type="topological domain" description="Cytoplasmic" evidence="3">
    <location>
        <begin position="217"/>
        <end position="224"/>
    </location>
</feature>
<feature type="transmembrane region" description="Helical" evidence="3">
    <location>
        <begin position="225"/>
        <end position="245"/>
    </location>
</feature>
<feature type="topological domain" description="Extracellular" evidence="3">
    <location>
        <begin position="246"/>
        <end position="248"/>
    </location>
</feature>
<feature type="transmembrane region" description="Helical" evidence="3">
    <location>
        <begin position="249"/>
        <end position="269"/>
    </location>
</feature>
<feature type="topological domain" description="Cytoplasmic" evidence="3">
    <location>
        <begin position="270"/>
        <end position="337"/>
    </location>
</feature>
<feature type="transmembrane region" description="Helical" evidence="3">
    <location>
        <begin position="338"/>
        <end position="358"/>
    </location>
</feature>
<feature type="topological domain" description="Extracellular" evidence="3">
    <location>
        <begin position="359"/>
        <end position="368"/>
    </location>
</feature>
<feature type="transmembrane region" description="Helical" evidence="3">
    <location>
        <begin position="369"/>
        <end position="389"/>
    </location>
</feature>
<feature type="topological domain" description="Cytoplasmic" evidence="3">
    <location>
        <begin position="390"/>
        <end position="395"/>
    </location>
</feature>
<feature type="transmembrane region" description="Helical" evidence="3">
    <location>
        <begin position="396"/>
        <end position="416"/>
    </location>
</feature>
<feature type="topological domain" description="Extracellular" evidence="3">
    <location>
        <begin position="417"/>
        <end position="420"/>
    </location>
</feature>
<feature type="transmembrane region" description="Helical" evidence="3">
    <location>
        <begin position="421"/>
        <end position="444"/>
    </location>
</feature>
<feature type="topological domain" description="Cytoplasmic" evidence="3">
    <location>
        <begin position="445"/>
        <end position="455"/>
    </location>
</feature>
<feature type="transmembrane region" description="Helical" evidence="3">
    <location>
        <begin position="456"/>
        <end position="475"/>
    </location>
</feature>
<feature type="topological domain" description="Extracellular" evidence="3">
    <location>
        <begin position="476"/>
        <end position="484"/>
    </location>
</feature>
<feature type="transmembrane region" description="Helical" evidence="3">
    <location>
        <begin position="485"/>
        <end position="505"/>
    </location>
</feature>
<feature type="topological domain" description="Cytoplasmic" evidence="3">
    <location>
        <begin position="506"/>
        <end position="550"/>
    </location>
</feature>
<feature type="region of interest" description="Disordered" evidence="4">
    <location>
        <begin position="514"/>
        <end position="550"/>
    </location>
</feature>
<feature type="glycosylation site" description="N-linked (GlcNAc...) asparagine" evidence="3">
    <location>
        <position position="39"/>
    </location>
</feature>
<feature type="glycosylation site" description="N-linked (GlcNAc...) asparagine" evidence="3">
    <location>
        <position position="92"/>
    </location>
</feature>
<feature type="glycosylation site" description="N-linked (GlcNAc...) asparagine" evidence="3">
    <location>
        <position position="113"/>
    </location>
</feature>
<dbReference type="EMBL" id="CR858294">
    <property type="protein sequence ID" value="CAH90531.1"/>
    <property type="molecule type" value="mRNA"/>
</dbReference>
<dbReference type="SMR" id="Q5RCH6"/>
<dbReference type="FunCoup" id="Q5RCH6">
    <property type="interactions" value="66"/>
</dbReference>
<dbReference type="STRING" id="9601.ENSPPYP00000003625"/>
<dbReference type="GlyCosmos" id="Q5RCH6">
    <property type="glycosylation" value="3 sites, No reported glycans"/>
</dbReference>
<dbReference type="eggNOG" id="KOG0255">
    <property type="taxonomic scope" value="Eukaryota"/>
</dbReference>
<dbReference type="InParanoid" id="Q5RCH6"/>
<dbReference type="Proteomes" id="UP000001595">
    <property type="component" value="Unplaced"/>
</dbReference>
<dbReference type="GO" id="GO:0016323">
    <property type="term" value="C:basolateral plasma membrane"/>
    <property type="evidence" value="ECO:0000250"/>
    <property type="project" value="UniProtKB"/>
</dbReference>
<dbReference type="GO" id="GO:0005886">
    <property type="term" value="C:plasma membrane"/>
    <property type="evidence" value="ECO:0000250"/>
    <property type="project" value="UniProtKB"/>
</dbReference>
<dbReference type="GO" id="GO:0008514">
    <property type="term" value="F:organic anion transmembrane transporter activity"/>
    <property type="evidence" value="ECO:0000250"/>
    <property type="project" value="UniProtKB"/>
</dbReference>
<dbReference type="GO" id="GO:0015132">
    <property type="term" value="F:prostaglandin transmembrane transporter activity"/>
    <property type="evidence" value="ECO:0000250"/>
    <property type="project" value="UniProtKB"/>
</dbReference>
<dbReference type="GO" id="GO:0005452">
    <property type="term" value="F:solute:inorganic anion antiporter activity"/>
    <property type="evidence" value="ECO:0000250"/>
    <property type="project" value="UniProtKB"/>
</dbReference>
<dbReference type="GO" id="GO:0015742">
    <property type="term" value="P:alpha-ketoglutarate transport"/>
    <property type="evidence" value="ECO:0000250"/>
    <property type="project" value="UniProtKB"/>
</dbReference>
<dbReference type="GO" id="GO:0015711">
    <property type="term" value="P:organic anion transport"/>
    <property type="evidence" value="ECO:0000250"/>
    <property type="project" value="UniProtKB"/>
</dbReference>
<dbReference type="GO" id="GO:0097254">
    <property type="term" value="P:renal tubular secretion"/>
    <property type="evidence" value="ECO:0000250"/>
    <property type="project" value="UniProtKB"/>
</dbReference>
<dbReference type="GO" id="GO:0042908">
    <property type="term" value="P:xenobiotic transport"/>
    <property type="evidence" value="ECO:0007669"/>
    <property type="project" value="UniProtKB-ARBA"/>
</dbReference>
<dbReference type="CDD" id="cd17446">
    <property type="entry name" value="MFS_SLC22A6_OAT1_like"/>
    <property type="match status" value="1"/>
</dbReference>
<dbReference type="FunFam" id="1.20.1250.20:FF:000023">
    <property type="entry name" value="Solute carrier family 22 member 6"/>
    <property type="match status" value="1"/>
</dbReference>
<dbReference type="Gene3D" id="1.20.1250.20">
    <property type="entry name" value="MFS general substrate transporter like domains"/>
    <property type="match status" value="1"/>
</dbReference>
<dbReference type="InterPro" id="IPR020846">
    <property type="entry name" value="MFS_dom"/>
</dbReference>
<dbReference type="InterPro" id="IPR005828">
    <property type="entry name" value="MFS_sugar_transport-like"/>
</dbReference>
<dbReference type="InterPro" id="IPR036259">
    <property type="entry name" value="MFS_trans_sf"/>
</dbReference>
<dbReference type="InterPro" id="IPR004749">
    <property type="entry name" value="Orgcat_transp/SVOP"/>
</dbReference>
<dbReference type="NCBIfam" id="TIGR00898">
    <property type="entry name" value="2A0119"/>
    <property type="match status" value="1"/>
</dbReference>
<dbReference type="PANTHER" id="PTHR24064">
    <property type="entry name" value="SOLUTE CARRIER FAMILY 22 MEMBER"/>
    <property type="match status" value="1"/>
</dbReference>
<dbReference type="Pfam" id="PF00083">
    <property type="entry name" value="Sugar_tr"/>
    <property type="match status" value="1"/>
</dbReference>
<dbReference type="SUPFAM" id="SSF103473">
    <property type="entry name" value="MFS general substrate transporter"/>
    <property type="match status" value="1"/>
</dbReference>
<dbReference type="PROSITE" id="PS50850">
    <property type="entry name" value="MFS"/>
    <property type="match status" value="1"/>
</dbReference>
<gene>
    <name type="primary">SLC22A6</name>
    <name type="synonym">OAT1</name>
</gene>
<organism>
    <name type="scientific">Pongo abelii</name>
    <name type="common">Sumatran orangutan</name>
    <name type="synonym">Pongo pygmaeus abelii</name>
    <dbReference type="NCBI Taxonomy" id="9601"/>
    <lineage>
        <taxon>Eukaryota</taxon>
        <taxon>Metazoa</taxon>
        <taxon>Chordata</taxon>
        <taxon>Craniata</taxon>
        <taxon>Vertebrata</taxon>
        <taxon>Euteleostomi</taxon>
        <taxon>Mammalia</taxon>
        <taxon>Eutheria</taxon>
        <taxon>Euarchontoglires</taxon>
        <taxon>Primates</taxon>
        <taxon>Haplorrhini</taxon>
        <taxon>Catarrhini</taxon>
        <taxon>Hominidae</taxon>
        <taxon>Pongo</taxon>
    </lineage>
</organism>
<keyword id="KW-1003">Cell membrane</keyword>
<keyword id="KW-0325">Glycoprotein</keyword>
<keyword id="KW-0472">Membrane</keyword>
<keyword id="KW-1185">Reference proteome</keyword>
<keyword id="KW-0812">Transmembrane</keyword>
<keyword id="KW-1133">Transmembrane helix</keyword>
<protein>
    <recommendedName>
        <fullName>Solute carrier family 22 member 6</fullName>
    </recommendedName>
    <alternativeName>
        <fullName>Organic anion transporter 1</fullName>
    </alternativeName>
    <alternativeName>
        <fullName>Renal organic anion transporter 1</fullName>
        <shortName>ROAT1</shortName>
    </alternativeName>
</protein>
<accession>Q5RCH6</accession>
<comment type="function">
    <text evidence="1 2">Involved in the renal elimination of endogenous and exogenous organic anions. Functions as organic anion exchanger when the uptake of one molecule of organic anion is coupled with an efflux of one molecule of endogenous dicarboxylic acid (glutarate, ketoglutarate, etc). Mediates the transport of prostaglandin E2 (PGE2) and prostaglandin F2-alpha (PGF2-alpha) and may be involved in their renal excretion (By similarity). Also mediates the sodium-independent uptake of p-aminohippurate (PAH), 2,3-dimercapto-1-propanesulfonic acid (DMPS), cidofovir, adefovir, 9-(2-phosphonylmethoxyethyl) guanine (PMEG), 9-(2-phosphonylmethoxyethyl) diaminopurine (PMEDAP), ochratoxin (OTA), acyclovir (ACV), 3'-azido-3-'deoxythymidine (AZT), cimetidine (CMD), 2,4-dichloro-phenoxyacetate (2,4-D), hippurate (HA), indoleacetate (IA), indoxyl sulfate (IS) and 3-carboxy-4-methyl-5-propyl-2-furanpropionate (CMPF) and edaravone sulfate. PAH uptake is inhibited by p-chloromercuribenzenesulphonate (PCMBS), diethyl pyrocarbonate (DEPC), indomethacin, sulindac, diclofenac, carprofen, okadaic acid, benzothiazolylcysteine (BTC), S-chlorotrifluoroethylcysteine (CTFC), cysteine S-conjugates S-dichlorovinylcysteine (DCVC), furosemide, steviol, phorbol 12-myristate 13-acetate (PMA), calcium ionophore A23187, benzylpenicillin, bumetamide, losartan, probenecid, phenol red, urate, glutarate and alpha-ketoglutarate (By similarity).</text>
</comment>
<comment type="catalytic activity">
    <reaction evidence="2">
        <text>prostaglandin F2alpha(out) = prostaglandin F2alpha(in)</text>
        <dbReference type="Rhea" id="RHEA:50988"/>
        <dbReference type="ChEBI" id="CHEBI:57404"/>
    </reaction>
</comment>
<comment type="catalytic activity">
    <reaction evidence="2">
        <text>prostaglandin E2(out) = prostaglandin E2(in)</text>
        <dbReference type="Rhea" id="RHEA:50984"/>
        <dbReference type="ChEBI" id="CHEBI:606564"/>
    </reaction>
</comment>
<comment type="subcellular location">
    <subcellularLocation>
        <location evidence="5">Cell membrane</location>
        <topology evidence="5">Multi-pass membrane protein</topology>
    </subcellularLocation>
</comment>
<comment type="PTM">
    <text evidence="1">Glycosylated. Glycosylation is necessary for proper targeting of the transporter to the plasma membrane (By similarity).</text>
</comment>
<comment type="similarity">
    <text evidence="5">Belongs to the major facilitator (TC 2.A.1) superfamily. Organic cation transporter (TC 2.A.1.19) family.</text>
</comment>
<sequence>MAFNDLLQQVGGVGRFQQIQVTLVVLPLLLMASHNTLQNFTAAIPTHHCRPPADANLSKNGGLEVWLPRDRKGQPESCLRFTSPQWGPPFPNGTEANGTGATEPCTDGWIYDNSTFPSTIVTEWDLVCSHRALRQLAQSLYMVGVLLGAMVFGYLADRLGRRKVLILNYLQTAVSGTCTAFAPNFSIYCAFRLLSGMSLAGISLNCMTLNVEWMPIHTRACVGTLIGYVYSLGQFLLAGVAYAVPHWRHLQLLVSAPFFAFFIYSWFFIESARWHSSSGRLDLTLRALQRVARINGKREEGAKLSMEVLRASLQKELTMGKGQASAMELLRCPTLRHLFLCLSMLWFATSFAYYGLVMDLQGFGVSIYLIQVIFGAVDLPAKLVGFLVINSLGRRPAQMAALLLAGICILLNGVIPQDQSIVRTSLAVPGKGCLAASFNCIFLYTGELYPTMIRQTGMGMGSTMARVGSIVSPLVSMTAELYPSMPLFIYGAVPVAASAVTVLLPETLGQPLPDTVQDLESRKGKQTRQQQEHQKYMVPLQASAQEKNGL</sequence>
<proteinExistence type="evidence at transcript level"/>
<name>S22A6_PONAB</name>
<evidence type="ECO:0000250" key="1"/>
<evidence type="ECO:0000250" key="2">
    <source>
        <dbReference type="UniProtKB" id="Q4U2R8"/>
    </source>
</evidence>
<evidence type="ECO:0000255" key="3"/>
<evidence type="ECO:0000256" key="4">
    <source>
        <dbReference type="SAM" id="MobiDB-lite"/>
    </source>
</evidence>
<evidence type="ECO:0000305" key="5"/>